<sequence>MEDVFKGIEKEIIKIYKIPERKGRFSNFKFKNKEINELIDALGFKLYLHQVKALKYLYNKKDVVVTTSTASGKSEIFRLAIFDNFLSNPDDRYLLIYPTRALINNQYEKFSMENELFYKITNKRVKAEILTGDVGLEKRREILKDKPNVLFTTPDMLHYQILKNHNNYLWLLKNLKLLVVDELHVYRGVFGTNMVYVFKRLLKLLKRLNNNLQILCLSATLKNPKEFVKLLFNRDFEVVDKSYNPSSRKYLAILEPKNLDNKQLLRRLIENLVDNNIKTLVFFDTRKETEKLMRFLLNSKVFYKLSTYKGTLPKYVREEIEEKFKNGEILALLTTNALELGIDIGDLDAVINYGIPPDGIFSLIQRFGRAGRRDKEALNIIVLRKDGLDYYYKEHLNELYERIRKGIIEYMPVNIKNRFVTKKHLHYLISELKIVDFDELNDFEKEIVKELEREGKIKIYKNPITNKTEIRNVKQPIYSSIRTASDESYYLILDKPWIKSKLLNKTQSEILSFINWLKIKGYVIEEVDKDEYYRSLITGMPYFSRGKLFIAKDKIGIRKFHFIFADELDMFWDVEALQKKEEEIDILDIYDKKSYKDIDIYYGRLRVRKIYEGFIVRGVDVDKYYQELLALKDNGILDAEIDLFKDFFGLNFISVKFNKKIIRDFETDGIWLCYFQIILGMLTK</sequence>
<gene>
    <name type="ordered locus">MJ1574</name>
</gene>
<protein>
    <recommendedName>
        <fullName>Uncharacterized ATP-dependent helicase MJ1574</fullName>
        <ecNumber>3.6.4.-</ecNumber>
    </recommendedName>
</protein>
<keyword id="KW-0067">ATP-binding</keyword>
<keyword id="KW-0347">Helicase</keyword>
<keyword id="KW-0378">Hydrolase</keyword>
<keyword id="KW-0547">Nucleotide-binding</keyword>
<keyword id="KW-1185">Reference proteome</keyword>
<dbReference type="EC" id="3.6.4.-"/>
<dbReference type="EMBL" id="L77117">
    <property type="protein sequence ID" value="AAB99590.1"/>
    <property type="molecule type" value="Genomic_DNA"/>
</dbReference>
<dbReference type="PIR" id="E64496">
    <property type="entry name" value="E64496"/>
</dbReference>
<dbReference type="RefSeq" id="WP_010871099.1">
    <property type="nucleotide sequence ID" value="NC_000909.1"/>
</dbReference>
<dbReference type="SMR" id="Q58969"/>
<dbReference type="FunCoup" id="Q58969">
    <property type="interactions" value="117"/>
</dbReference>
<dbReference type="STRING" id="243232.MJ_1574"/>
<dbReference type="PaxDb" id="243232-MJ_1574"/>
<dbReference type="EnsemblBacteria" id="AAB99590">
    <property type="protein sequence ID" value="AAB99590"/>
    <property type="gene ID" value="MJ_1574"/>
</dbReference>
<dbReference type="GeneID" id="1452483"/>
<dbReference type="KEGG" id="mja:MJ_1574"/>
<dbReference type="eggNOG" id="arCOG00555">
    <property type="taxonomic scope" value="Archaea"/>
</dbReference>
<dbReference type="HOGENOM" id="CLU_000809_3_2_2"/>
<dbReference type="InParanoid" id="Q58969"/>
<dbReference type="OrthoDB" id="36796at2157"/>
<dbReference type="PhylomeDB" id="Q58969"/>
<dbReference type="Proteomes" id="UP000000805">
    <property type="component" value="Chromosome"/>
</dbReference>
<dbReference type="GO" id="GO:0043138">
    <property type="term" value="F:3'-5' DNA helicase activity"/>
    <property type="evidence" value="ECO:0000318"/>
    <property type="project" value="GO_Central"/>
</dbReference>
<dbReference type="GO" id="GO:0005524">
    <property type="term" value="F:ATP binding"/>
    <property type="evidence" value="ECO:0007669"/>
    <property type="project" value="UniProtKB-KW"/>
</dbReference>
<dbReference type="GO" id="GO:0016787">
    <property type="term" value="F:hydrolase activity"/>
    <property type="evidence" value="ECO:0007669"/>
    <property type="project" value="UniProtKB-KW"/>
</dbReference>
<dbReference type="GO" id="GO:0003676">
    <property type="term" value="F:nucleic acid binding"/>
    <property type="evidence" value="ECO:0007669"/>
    <property type="project" value="InterPro"/>
</dbReference>
<dbReference type="GO" id="GO:0036297">
    <property type="term" value="P:interstrand cross-link repair"/>
    <property type="evidence" value="ECO:0000318"/>
    <property type="project" value="GO_Central"/>
</dbReference>
<dbReference type="GO" id="GO:0006289">
    <property type="term" value="P:nucleotide-excision repair"/>
    <property type="evidence" value="ECO:0000318"/>
    <property type="project" value="GO_Central"/>
</dbReference>
<dbReference type="CDD" id="cd18797">
    <property type="entry name" value="SF2_C_Hrq"/>
    <property type="match status" value="1"/>
</dbReference>
<dbReference type="Gene3D" id="3.40.50.300">
    <property type="entry name" value="P-loop containing nucleotide triphosphate hydrolases"/>
    <property type="match status" value="2"/>
</dbReference>
<dbReference type="InterPro" id="IPR011545">
    <property type="entry name" value="DEAD/DEAH_box_helicase_dom"/>
</dbReference>
<dbReference type="InterPro" id="IPR014001">
    <property type="entry name" value="Helicase_ATP-bd"/>
</dbReference>
<dbReference type="InterPro" id="IPR001650">
    <property type="entry name" value="Helicase_C-like"/>
</dbReference>
<dbReference type="InterPro" id="IPR027417">
    <property type="entry name" value="P-loop_NTPase"/>
</dbReference>
<dbReference type="PANTHER" id="PTHR47957">
    <property type="entry name" value="ATP-DEPENDENT HELICASE HRQ1"/>
    <property type="match status" value="1"/>
</dbReference>
<dbReference type="PANTHER" id="PTHR47957:SF3">
    <property type="entry name" value="ATP-DEPENDENT HELICASE HRQ1"/>
    <property type="match status" value="1"/>
</dbReference>
<dbReference type="Pfam" id="PF00270">
    <property type="entry name" value="DEAD"/>
    <property type="match status" value="1"/>
</dbReference>
<dbReference type="Pfam" id="PF00271">
    <property type="entry name" value="Helicase_C"/>
    <property type="match status" value="1"/>
</dbReference>
<dbReference type="SMART" id="SM00487">
    <property type="entry name" value="DEXDc"/>
    <property type="match status" value="1"/>
</dbReference>
<dbReference type="SMART" id="SM00490">
    <property type="entry name" value="HELICc"/>
    <property type="match status" value="1"/>
</dbReference>
<dbReference type="SUPFAM" id="SSF52540">
    <property type="entry name" value="P-loop containing nucleoside triphosphate hydrolases"/>
    <property type="match status" value="1"/>
</dbReference>
<dbReference type="PROSITE" id="PS51192">
    <property type="entry name" value="HELICASE_ATP_BIND_1"/>
    <property type="match status" value="1"/>
</dbReference>
<dbReference type="PROSITE" id="PS51194">
    <property type="entry name" value="HELICASE_CTER"/>
    <property type="match status" value="1"/>
</dbReference>
<name>Y1574_METJA</name>
<organism>
    <name type="scientific">Methanocaldococcus jannaschii (strain ATCC 43067 / DSM 2661 / JAL-1 / JCM 10045 / NBRC 100440)</name>
    <name type="common">Methanococcus jannaschii</name>
    <dbReference type="NCBI Taxonomy" id="243232"/>
    <lineage>
        <taxon>Archaea</taxon>
        <taxon>Methanobacteriati</taxon>
        <taxon>Methanobacteriota</taxon>
        <taxon>Methanomada group</taxon>
        <taxon>Methanococci</taxon>
        <taxon>Methanococcales</taxon>
        <taxon>Methanocaldococcaceae</taxon>
        <taxon>Methanocaldococcus</taxon>
    </lineage>
</organism>
<feature type="chain" id="PRO_0000102200" description="Uncharacterized ATP-dependent helicase MJ1574">
    <location>
        <begin position="1"/>
        <end position="684"/>
    </location>
</feature>
<feature type="domain" description="Helicase ATP-binding" evidence="1">
    <location>
        <begin position="54"/>
        <end position="239"/>
    </location>
</feature>
<feature type="domain" description="Helicase C-terminal" evidence="2">
    <location>
        <begin position="264"/>
        <end position="419"/>
    </location>
</feature>
<feature type="short sequence motif" description="DEVH box">
    <location>
        <begin position="181"/>
        <end position="184"/>
    </location>
</feature>
<feature type="binding site" evidence="1">
    <location>
        <begin position="67"/>
        <end position="74"/>
    </location>
    <ligand>
        <name>ATP</name>
        <dbReference type="ChEBI" id="CHEBI:30616"/>
    </ligand>
</feature>
<evidence type="ECO:0000255" key="1">
    <source>
        <dbReference type="PROSITE-ProRule" id="PRU00541"/>
    </source>
</evidence>
<evidence type="ECO:0000255" key="2">
    <source>
        <dbReference type="PROSITE-ProRule" id="PRU00542"/>
    </source>
</evidence>
<evidence type="ECO:0000305" key="3"/>
<comment type="similarity">
    <text evidence="3">Belongs to the helicase family.</text>
</comment>
<accession>Q58969</accession>
<reference key="1">
    <citation type="journal article" date="1996" name="Science">
        <title>Complete genome sequence of the methanogenic archaeon, Methanococcus jannaschii.</title>
        <authorList>
            <person name="Bult C.J."/>
            <person name="White O."/>
            <person name="Olsen G.J."/>
            <person name="Zhou L."/>
            <person name="Fleischmann R.D."/>
            <person name="Sutton G.G."/>
            <person name="Blake J.A."/>
            <person name="FitzGerald L.M."/>
            <person name="Clayton R.A."/>
            <person name="Gocayne J.D."/>
            <person name="Kerlavage A.R."/>
            <person name="Dougherty B.A."/>
            <person name="Tomb J.-F."/>
            <person name="Adams M.D."/>
            <person name="Reich C.I."/>
            <person name="Overbeek R."/>
            <person name="Kirkness E.F."/>
            <person name="Weinstock K.G."/>
            <person name="Merrick J.M."/>
            <person name="Glodek A."/>
            <person name="Scott J.L."/>
            <person name="Geoghagen N.S.M."/>
            <person name="Weidman J.F."/>
            <person name="Fuhrmann J.L."/>
            <person name="Nguyen D."/>
            <person name="Utterback T.R."/>
            <person name="Kelley J.M."/>
            <person name="Peterson J.D."/>
            <person name="Sadow P.W."/>
            <person name="Hanna M.C."/>
            <person name="Cotton M.D."/>
            <person name="Roberts K.M."/>
            <person name="Hurst M.A."/>
            <person name="Kaine B.P."/>
            <person name="Borodovsky M."/>
            <person name="Klenk H.-P."/>
            <person name="Fraser C.M."/>
            <person name="Smith H.O."/>
            <person name="Woese C.R."/>
            <person name="Venter J.C."/>
        </authorList>
    </citation>
    <scope>NUCLEOTIDE SEQUENCE [LARGE SCALE GENOMIC DNA]</scope>
    <source>
        <strain>ATCC 43067 / DSM 2661 / JAL-1 / JCM 10045 / NBRC 100440</strain>
    </source>
</reference>
<proteinExistence type="inferred from homology"/>